<name>KLRD1_MACMU</name>
<accession>Q9MZK9</accession>
<accession>Q9GK91</accession>
<accession>Q9MZK7</accession>
<accession>Q9MZK8</accession>
<protein>
    <recommendedName>
        <fullName>Natural killer cells antigen CD94</fullName>
    </recommendedName>
    <alternativeName>
        <fullName>Killer cell lectin-like receptor subfamily D member 1</fullName>
    </alternativeName>
    <alternativeName>
        <fullName>NK cell receptor</fullName>
    </alternativeName>
    <cdAntigenName>CD94</cdAntigenName>
</protein>
<dbReference type="EMBL" id="AF190931">
    <property type="protein sequence ID" value="AAF74527.1"/>
    <property type="molecule type" value="mRNA"/>
</dbReference>
<dbReference type="EMBL" id="AF190932">
    <property type="protein sequence ID" value="AAF74528.1"/>
    <property type="molecule type" value="mRNA"/>
</dbReference>
<dbReference type="EMBL" id="AF190933">
    <property type="protein sequence ID" value="AAF74529.1"/>
    <property type="molecule type" value="mRNA"/>
</dbReference>
<dbReference type="EMBL" id="AF294886">
    <property type="protein sequence ID" value="AAG34498.1"/>
    <property type="molecule type" value="mRNA"/>
</dbReference>
<dbReference type="RefSeq" id="NP_001028000.1">
    <property type="nucleotide sequence ID" value="NM_001032828.1"/>
</dbReference>
<dbReference type="RefSeq" id="XP_015006475.1">
    <property type="nucleotide sequence ID" value="XM_015150989.1"/>
</dbReference>
<dbReference type="SMR" id="Q9MZK9"/>
<dbReference type="FunCoup" id="Q9MZK9">
    <property type="interactions" value="196"/>
</dbReference>
<dbReference type="STRING" id="9544.ENSMMUP00000024061"/>
<dbReference type="GlyCosmos" id="Q9MZK9">
    <property type="glycosylation" value="2 sites, No reported glycans"/>
</dbReference>
<dbReference type="PaxDb" id="9544-ENSMMUP00000024061"/>
<dbReference type="GeneID" id="574145"/>
<dbReference type="KEGG" id="mcc:574145"/>
<dbReference type="CTD" id="3824"/>
<dbReference type="eggNOG" id="KOG4297">
    <property type="taxonomic scope" value="Eukaryota"/>
</dbReference>
<dbReference type="InParanoid" id="Q9MZK9"/>
<dbReference type="OrthoDB" id="8950604at2759"/>
<dbReference type="Proteomes" id="UP000006718">
    <property type="component" value="Unassembled WGS sequence"/>
</dbReference>
<dbReference type="GO" id="GO:0009897">
    <property type="term" value="C:external side of plasma membrane"/>
    <property type="evidence" value="ECO:0000318"/>
    <property type="project" value="GO_Central"/>
</dbReference>
<dbReference type="GO" id="GO:0005886">
    <property type="term" value="C:plasma membrane"/>
    <property type="evidence" value="ECO:0000250"/>
    <property type="project" value="UniProtKB"/>
</dbReference>
<dbReference type="GO" id="GO:0030246">
    <property type="term" value="F:carbohydrate binding"/>
    <property type="evidence" value="ECO:0007669"/>
    <property type="project" value="UniProtKB-KW"/>
</dbReference>
<dbReference type="GO" id="GO:0004888">
    <property type="term" value="F:transmembrane signaling receptor activity"/>
    <property type="evidence" value="ECO:0000318"/>
    <property type="project" value="GO_Central"/>
</dbReference>
<dbReference type="GO" id="GO:0045953">
    <property type="term" value="P:negative regulation of natural killer cell mediated cytotoxicity"/>
    <property type="evidence" value="ECO:0000250"/>
    <property type="project" value="UniProtKB"/>
</dbReference>
<dbReference type="GO" id="GO:0001915">
    <property type="term" value="P:negative regulation of T cell mediated cytotoxicity"/>
    <property type="evidence" value="ECO:0000250"/>
    <property type="project" value="UniProtKB"/>
</dbReference>
<dbReference type="GO" id="GO:0045954">
    <property type="term" value="P:positive regulation of natural killer cell mediated cytotoxicity"/>
    <property type="evidence" value="ECO:0000318"/>
    <property type="project" value="GO_Central"/>
</dbReference>
<dbReference type="GO" id="GO:0002223">
    <property type="term" value="P:stimulatory C-type lectin receptor signaling pathway"/>
    <property type="evidence" value="ECO:0000250"/>
    <property type="project" value="UniProtKB"/>
</dbReference>
<dbReference type="CDD" id="cd03593">
    <property type="entry name" value="CLECT_NK_receptors_like"/>
    <property type="match status" value="1"/>
</dbReference>
<dbReference type="FunFam" id="3.10.100.10:FF:000064">
    <property type="entry name" value="Natural killer cells antigen CD94"/>
    <property type="match status" value="1"/>
</dbReference>
<dbReference type="Gene3D" id="3.10.100.10">
    <property type="entry name" value="Mannose-Binding Protein A, subunit A"/>
    <property type="match status" value="1"/>
</dbReference>
<dbReference type="InterPro" id="IPR001304">
    <property type="entry name" value="C-type_lectin-like"/>
</dbReference>
<dbReference type="InterPro" id="IPR016186">
    <property type="entry name" value="C-type_lectin-like/link_sf"/>
</dbReference>
<dbReference type="InterPro" id="IPR016187">
    <property type="entry name" value="CTDL_fold"/>
</dbReference>
<dbReference type="InterPro" id="IPR050919">
    <property type="entry name" value="NKG2/CD94_NK_receptors"/>
</dbReference>
<dbReference type="InterPro" id="IPR033992">
    <property type="entry name" value="NKR-like_CTLD"/>
</dbReference>
<dbReference type="PANTHER" id="PTHR22800">
    <property type="entry name" value="C-TYPE LECTIN PROTEINS"/>
    <property type="match status" value="1"/>
</dbReference>
<dbReference type="PANTHER" id="PTHR22800:SF252">
    <property type="entry name" value="NATURAL KILLER CELLS ANTIGEN CD94"/>
    <property type="match status" value="1"/>
</dbReference>
<dbReference type="Pfam" id="PF00059">
    <property type="entry name" value="Lectin_C"/>
    <property type="match status" value="1"/>
</dbReference>
<dbReference type="SMART" id="SM00034">
    <property type="entry name" value="CLECT"/>
    <property type="match status" value="1"/>
</dbReference>
<dbReference type="SUPFAM" id="SSF56436">
    <property type="entry name" value="C-type lectin-like"/>
    <property type="match status" value="1"/>
</dbReference>
<dbReference type="PROSITE" id="PS50041">
    <property type="entry name" value="C_TYPE_LECTIN_2"/>
    <property type="match status" value="1"/>
</dbReference>
<comment type="function">
    <text evidence="1">Immune receptor involved in self-nonself discrimination. In complex with KLRC1 or KLRC2 on cytotoxic and regulatory lymphocyte subsets, recognizes non-classical major histocompatibility (MHC) class Ib molecule MHC-E loaded with self-peptides derived from the signal sequence of classical MHC class Ia and non-classical MHC class Ib molecules. Enables cytotoxic cells to monitor the expression of MHC class I molecules in healthy cells and to tolerate self. Primarily functions as a ligand binding subunit as it lacks the capacity to signal.</text>
</comment>
<comment type="function">
    <text evidence="1">KLRD1-KLRC1 acts as an immune inhibitory receptor. Key inhibitory receptor on natural killer (NK) cells that regulates their activation and effector functions. Dominantly counteracts T cell receptor signaling on a subset of memory/effector CD8-positive T cells as part of an antigen-driven response to avoid autoimmunity. On intraepithelial CD8-positive gamma-delta regulatory T cells triggers TGFB1 secretion, which in turn limits the cytotoxic programming of intraepithelial CD8-positive alpha-beta T cells, distinguishing harmless from pathogenic antigens. In MHC-E-rich tumor microenvironment, acts as an immune inhibitory checkpoint and may contribute to progressive loss of effector functions of NK cells and tumor-specific T cells, a state known as cell exhaustion. Upon MHC-E-peptide binding, transmits intracellular signals through KLRC1 immunoreceptor tyrosine-based inhibition motifs (ITIMs) by recruiting INPP5D/SHIP-1 and INPPL1/SHIP-2 tyrosine phosphatases to ITIMs, and ultimately opposing signals transmitted by activating receptors through dephosphorylation of proximal signaling molecules.</text>
</comment>
<comment type="function">
    <text evidence="1">KLRD1-KLRC2 acts as an immune activating receptor. On cytotoxic lymphocyte subsets recognizes MHC-E loaded with signal sequence-derived peptides from non-classical MHC class Ib MHC-G molecules, likely playing a role in the generation and effector functions of adaptive NK cells and in maternal-fetal tolerance during pregnancy. Regulates the effector functions of terminally differentiated cytotoxic lymphocyte subsets, and in particular may play a role in adaptive NK cell response to viral infection. Upon MHC-E-peptide binding, transmits intracellular signals via the adapter protein TYROBP/DAP12, triggering the phosphorylation of proximal signaling molecules and cell activation.</text>
</comment>
<comment type="subunit">
    <text evidence="1">Can form disulfide-bonded heterodimer with NKG2 family members KLRC1 and KLRC2. KLRD1-KLRC1 heterodimer interacts with peptide-bound MHC-E-B2M heterotrimeric complex. KLRD1 plays a prominent role in directly interacting with MHC-E. KLRD1-KLRC1 interacts with much higher affinity with peptide-bound MHC-E-B2M than KLRD1-KLRC2. Interacts with the adapter protein TYROBP/DAP12; this interaction is required for cell surface expression and cell activation.</text>
</comment>
<comment type="subcellular location">
    <subcellularLocation>
        <location evidence="1">Cell membrane</location>
        <topology evidence="2">Single-pass type II membrane protein</topology>
    </subcellularLocation>
</comment>
<comment type="alternative products">
    <event type="alternative splicing"/>
    <isoform>
        <id>Q9MZK9-1</id>
        <name>1</name>
        <name>CD94-A</name>
        <sequence type="displayed"/>
    </isoform>
    <isoform>
        <id>Q9MZK9-2</id>
        <name>2</name>
        <name>CD94-B</name>
        <sequence type="described" ref="VSP_003055"/>
    </isoform>
    <isoform>
        <id>Q9MZK9-3</id>
        <name>3</name>
        <name>CD94 alt</name>
        <sequence type="described" ref="VSP_003054"/>
    </isoform>
</comment>
<comment type="tissue specificity">
    <text>Natural killer cells.</text>
</comment>
<proteinExistence type="evidence at transcript level"/>
<keyword id="KW-0025">Alternative splicing</keyword>
<keyword id="KW-1003">Cell membrane</keyword>
<keyword id="KW-1015">Disulfide bond</keyword>
<keyword id="KW-0325">Glycoprotein</keyword>
<keyword id="KW-0430">Lectin</keyword>
<keyword id="KW-0472">Membrane</keyword>
<keyword id="KW-0675">Receptor</keyword>
<keyword id="KW-1185">Reference proteome</keyword>
<keyword id="KW-0735">Signal-anchor</keyword>
<keyword id="KW-0812">Transmembrane</keyword>
<keyword id="KW-1133">Transmembrane helix</keyword>
<sequence length="179" mass="20607">MAVFKTTLWRLISGTLGIICLSLMATLGILLKNSFTKLSVEPAYTPGPNIELQKDSDCCSCHEKWVGYRCNCYFISSEEKTWNESRHFCASQKSSLLQLQNRDELDFMSSSQHFYWIGLSYSEEHTAWLWENGSALSQYLFPSFETFKPKNCIAYNSKGNALDESCETKNRYICKQQLI</sequence>
<reference key="1">
    <citation type="journal article" date="2000" name="Immunogenetics">
        <title>Characterization of rhesus monkey CD94/NKG2 family members and identification of novel transmembrane-deleted forms of NKG2-A, B, C, and D.</title>
        <authorList>
            <person name="LaBonte M.L."/>
            <person name="Levy D.B."/>
            <person name="Letvin N.L."/>
        </authorList>
    </citation>
    <scope>NUCLEOTIDE SEQUENCE [MRNA] (ISOFORMS 1; 2 AND 3)</scope>
</reference>
<reference key="2">
    <citation type="journal article" date="2001" name="Immunogenetics">
        <title>Selective expression of NKG2-A and NKG2-C mRNAs and novel alternative splicing of 5' exons in rhesus monkey decidua.</title>
        <authorList>
            <person name="Kravitz R.H."/>
            <person name="Grendell R.L."/>
            <person name="Slukvin I.I."/>
            <person name="Golos T.G."/>
        </authorList>
    </citation>
    <scope>NUCLEOTIDE SEQUENCE [MRNA] (ISOFORM 1)</scope>
</reference>
<gene>
    <name type="primary">KLRD1</name>
    <name type="synonym">CD94</name>
</gene>
<organism>
    <name type="scientific">Macaca mulatta</name>
    <name type="common">Rhesus macaque</name>
    <dbReference type="NCBI Taxonomy" id="9544"/>
    <lineage>
        <taxon>Eukaryota</taxon>
        <taxon>Metazoa</taxon>
        <taxon>Chordata</taxon>
        <taxon>Craniata</taxon>
        <taxon>Vertebrata</taxon>
        <taxon>Euteleostomi</taxon>
        <taxon>Mammalia</taxon>
        <taxon>Eutheria</taxon>
        <taxon>Euarchontoglires</taxon>
        <taxon>Primates</taxon>
        <taxon>Haplorrhini</taxon>
        <taxon>Catarrhini</taxon>
        <taxon>Cercopithecidae</taxon>
        <taxon>Cercopithecinae</taxon>
        <taxon>Macaca</taxon>
    </lineage>
</organism>
<feature type="chain" id="PRO_0000046588" description="Natural killer cells antigen CD94">
    <location>
        <begin position="1"/>
        <end position="179"/>
    </location>
</feature>
<feature type="topological domain" description="Cytoplasmic" evidence="2">
    <location>
        <begin position="1"/>
        <end position="10"/>
    </location>
</feature>
<feature type="transmembrane region" description="Helical; Signal-anchor for type II membrane protein" evidence="2">
    <location>
        <begin position="11"/>
        <end position="31"/>
    </location>
</feature>
<feature type="topological domain" description="Extracellular" evidence="2">
    <location>
        <begin position="32"/>
        <end position="179"/>
    </location>
</feature>
<feature type="domain" description="C-type lectin" evidence="3">
    <location>
        <begin position="68"/>
        <end position="175"/>
    </location>
</feature>
<feature type="glycosylation site" description="N-linked (GlcNAc...) asparagine" evidence="2">
    <location>
        <position position="83"/>
    </location>
</feature>
<feature type="glycosylation site" description="N-linked (GlcNAc...) asparagine" evidence="2">
    <location>
        <position position="132"/>
    </location>
</feature>
<feature type="disulfide bond" evidence="3">
    <location>
        <begin position="58"/>
        <end position="70"/>
    </location>
</feature>
<feature type="disulfide bond" description="Interchain (with C-116 in KLRC1/NGK2A)" evidence="3">
    <location>
        <position position="59"/>
    </location>
</feature>
<feature type="disulfide bond" evidence="3">
    <location>
        <begin position="61"/>
        <end position="72"/>
    </location>
</feature>
<feature type="disulfide bond" evidence="3">
    <location>
        <begin position="89"/>
        <end position="174"/>
    </location>
</feature>
<feature type="disulfide bond" evidence="3">
    <location>
        <begin position="152"/>
        <end position="166"/>
    </location>
</feature>
<feature type="splice variant" id="VSP_003054" description="In isoform 3." evidence="4">
    <original>MAVFKTTLWRLISGTLGIICLSLMATLGILLKNS</original>
    <variation>MAA</variation>
    <location>
        <begin position="1"/>
        <end position="34"/>
    </location>
</feature>
<feature type="splice variant" id="VSP_003055" description="In isoform 2." evidence="4">
    <original>L</original>
    <variation>LQ</variation>
    <location>
        <position position="105"/>
    </location>
</feature>
<feature type="sequence variant">
    <original>Y</original>
    <variation>D</variation>
    <location>
        <position position="139"/>
    </location>
</feature>
<evidence type="ECO:0000250" key="1">
    <source>
        <dbReference type="UniProtKB" id="Q13241"/>
    </source>
</evidence>
<evidence type="ECO:0000255" key="2"/>
<evidence type="ECO:0000255" key="3">
    <source>
        <dbReference type="PROSITE-ProRule" id="PRU00040"/>
    </source>
</evidence>
<evidence type="ECO:0000303" key="4">
    <source>
    </source>
</evidence>